<name>TIG_STRS7</name>
<organism>
    <name type="scientific">Streptococcus equi subsp. zooepidemicus (strain H70)</name>
    <dbReference type="NCBI Taxonomy" id="553483"/>
    <lineage>
        <taxon>Bacteria</taxon>
        <taxon>Bacillati</taxon>
        <taxon>Bacillota</taxon>
        <taxon>Bacilli</taxon>
        <taxon>Lactobacillales</taxon>
        <taxon>Streptococcaceae</taxon>
        <taxon>Streptococcus</taxon>
    </lineage>
</organism>
<dbReference type="EC" id="5.2.1.8" evidence="1"/>
<dbReference type="EMBL" id="FM204884">
    <property type="protein sequence ID" value="CAW98012.1"/>
    <property type="molecule type" value="Genomic_DNA"/>
</dbReference>
<dbReference type="SMR" id="C0MFQ7"/>
<dbReference type="KEGG" id="seq:SZO_02510"/>
<dbReference type="eggNOG" id="COG0544">
    <property type="taxonomic scope" value="Bacteria"/>
</dbReference>
<dbReference type="HOGENOM" id="CLU_033058_3_2_9"/>
<dbReference type="Proteomes" id="UP000001368">
    <property type="component" value="Chromosome"/>
</dbReference>
<dbReference type="GO" id="GO:0005737">
    <property type="term" value="C:cytoplasm"/>
    <property type="evidence" value="ECO:0007669"/>
    <property type="project" value="UniProtKB-SubCell"/>
</dbReference>
<dbReference type="GO" id="GO:0003755">
    <property type="term" value="F:peptidyl-prolyl cis-trans isomerase activity"/>
    <property type="evidence" value="ECO:0007669"/>
    <property type="project" value="UniProtKB-UniRule"/>
</dbReference>
<dbReference type="GO" id="GO:0044183">
    <property type="term" value="F:protein folding chaperone"/>
    <property type="evidence" value="ECO:0007669"/>
    <property type="project" value="TreeGrafter"/>
</dbReference>
<dbReference type="GO" id="GO:0043022">
    <property type="term" value="F:ribosome binding"/>
    <property type="evidence" value="ECO:0007669"/>
    <property type="project" value="TreeGrafter"/>
</dbReference>
<dbReference type="GO" id="GO:0051083">
    <property type="term" value="P:'de novo' cotranslational protein folding"/>
    <property type="evidence" value="ECO:0007669"/>
    <property type="project" value="TreeGrafter"/>
</dbReference>
<dbReference type="GO" id="GO:0051301">
    <property type="term" value="P:cell division"/>
    <property type="evidence" value="ECO:0007669"/>
    <property type="project" value="UniProtKB-KW"/>
</dbReference>
<dbReference type="GO" id="GO:0061077">
    <property type="term" value="P:chaperone-mediated protein folding"/>
    <property type="evidence" value="ECO:0007669"/>
    <property type="project" value="TreeGrafter"/>
</dbReference>
<dbReference type="GO" id="GO:0015031">
    <property type="term" value="P:protein transport"/>
    <property type="evidence" value="ECO:0007669"/>
    <property type="project" value="UniProtKB-UniRule"/>
</dbReference>
<dbReference type="GO" id="GO:0043335">
    <property type="term" value="P:protein unfolding"/>
    <property type="evidence" value="ECO:0007669"/>
    <property type="project" value="TreeGrafter"/>
</dbReference>
<dbReference type="FunFam" id="3.10.50.40:FF:000001">
    <property type="entry name" value="Trigger factor"/>
    <property type="match status" value="1"/>
</dbReference>
<dbReference type="Gene3D" id="3.10.50.40">
    <property type="match status" value="1"/>
</dbReference>
<dbReference type="Gene3D" id="3.30.70.1050">
    <property type="entry name" value="Trigger factor ribosome-binding domain"/>
    <property type="match status" value="1"/>
</dbReference>
<dbReference type="Gene3D" id="1.10.3120.10">
    <property type="entry name" value="Trigger factor, C-terminal domain"/>
    <property type="match status" value="1"/>
</dbReference>
<dbReference type="HAMAP" id="MF_00303">
    <property type="entry name" value="Trigger_factor_Tig"/>
    <property type="match status" value="1"/>
</dbReference>
<dbReference type="InterPro" id="IPR046357">
    <property type="entry name" value="PPIase_dom_sf"/>
</dbReference>
<dbReference type="InterPro" id="IPR001179">
    <property type="entry name" value="PPIase_FKBP_dom"/>
</dbReference>
<dbReference type="InterPro" id="IPR005215">
    <property type="entry name" value="Trig_fac"/>
</dbReference>
<dbReference type="InterPro" id="IPR008880">
    <property type="entry name" value="Trigger_fac_C"/>
</dbReference>
<dbReference type="InterPro" id="IPR037041">
    <property type="entry name" value="Trigger_fac_C_sf"/>
</dbReference>
<dbReference type="InterPro" id="IPR008881">
    <property type="entry name" value="Trigger_fac_ribosome-bd_bac"/>
</dbReference>
<dbReference type="InterPro" id="IPR036611">
    <property type="entry name" value="Trigger_fac_ribosome-bd_sf"/>
</dbReference>
<dbReference type="InterPro" id="IPR027304">
    <property type="entry name" value="Trigger_fact/SurA_dom_sf"/>
</dbReference>
<dbReference type="NCBIfam" id="TIGR00115">
    <property type="entry name" value="tig"/>
    <property type="match status" value="1"/>
</dbReference>
<dbReference type="PANTHER" id="PTHR30560">
    <property type="entry name" value="TRIGGER FACTOR CHAPERONE AND PEPTIDYL-PROLYL CIS/TRANS ISOMERASE"/>
    <property type="match status" value="1"/>
</dbReference>
<dbReference type="PANTHER" id="PTHR30560:SF3">
    <property type="entry name" value="TRIGGER FACTOR-LIKE PROTEIN TIG, CHLOROPLASTIC"/>
    <property type="match status" value="1"/>
</dbReference>
<dbReference type="Pfam" id="PF00254">
    <property type="entry name" value="FKBP_C"/>
    <property type="match status" value="1"/>
</dbReference>
<dbReference type="Pfam" id="PF05698">
    <property type="entry name" value="Trigger_C"/>
    <property type="match status" value="1"/>
</dbReference>
<dbReference type="Pfam" id="PF05697">
    <property type="entry name" value="Trigger_N"/>
    <property type="match status" value="1"/>
</dbReference>
<dbReference type="PIRSF" id="PIRSF003095">
    <property type="entry name" value="Trigger_factor"/>
    <property type="match status" value="1"/>
</dbReference>
<dbReference type="SUPFAM" id="SSF54534">
    <property type="entry name" value="FKBP-like"/>
    <property type="match status" value="1"/>
</dbReference>
<dbReference type="SUPFAM" id="SSF109998">
    <property type="entry name" value="Triger factor/SurA peptide-binding domain-like"/>
    <property type="match status" value="1"/>
</dbReference>
<dbReference type="SUPFAM" id="SSF102735">
    <property type="entry name" value="Trigger factor ribosome-binding domain"/>
    <property type="match status" value="1"/>
</dbReference>
<dbReference type="PROSITE" id="PS50059">
    <property type="entry name" value="FKBP_PPIASE"/>
    <property type="match status" value="1"/>
</dbReference>
<accession>C0MFQ7</accession>
<evidence type="ECO:0000255" key="1">
    <source>
        <dbReference type="HAMAP-Rule" id="MF_00303"/>
    </source>
</evidence>
<proteinExistence type="inferred from homology"/>
<feature type="chain" id="PRO_1000205000" description="Trigger factor">
    <location>
        <begin position="1"/>
        <end position="427"/>
    </location>
</feature>
<feature type="domain" description="PPIase FKBP-type" evidence="1">
    <location>
        <begin position="163"/>
        <end position="248"/>
    </location>
</feature>
<comment type="function">
    <text evidence="1">Involved in protein export. Acts as a chaperone by maintaining the newly synthesized protein in an open conformation. Functions as a peptidyl-prolyl cis-trans isomerase.</text>
</comment>
<comment type="catalytic activity">
    <reaction evidence="1">
        <text>[protein]-peptidylproline (omega=180) = [protein]-peptidylproline (omega=0)</text>
        <dbReference type="Rhea" id="RHEA:16237"/>
        <dbReference type="Rhea" id="RHEA-COMP:10747"/>
        <dbReference type="Rhea" id="RHEA-COMP:10748"/>
        <dbReference type="ChEBI" id="CHEBI:83833"/>
        <dbReference type="ChEBI" id="CHEBI:83834"/>
        <dbReference type="EC" id="5.2.1.8"/>
    </reaction>
</comment>
<comment type="subcellular location">
    <subcellularLocation>
        <location>Cytoplasm</location>
    </subcellularLocation>
    <text evidence="1">About half TF is bound to the ribosome near the polypeptide exit tunnel while the other half is free in the cytoplasm.</text>
</comment>
<comment type="domain">
    <text evidence="1">Consists of 3 domains; the N-terminus binds the ribosome, the middle domain has PPIase activity, while the C-terminus has intrinsic chaperone activity on its own.</text>
</comment>
<comment type="similarity">
    <text evidence="1">Belongs to the FKBP-type PPIase family. Tig subfamily.</text>
</comment>
<sequence length="427" mass="47173">MSTSFENKATNRGVITFTISQDKIKPALDQAFNKIKKDLNAPGFRKGHMPRPVFNQRFGEEVLYEEALNIVLPAAYEGAVAELELDVVAQPKIDVVSMEKGQEWTLTAEVVTKPEVKLGDYKDLTVEVEASKEVTDEEVDAKVERERNNLAELVVKEDAAVEGDTVVIDFVGSVDGVEFDGGKGDNFSLELGSGQFIPGFEEQLVGAKAGDTVEVNVTFPENYQAEDLAGKAAKFVTTVHEVKAKEVPELDDELAKDIDEEVETLDELKAKYRKELEASKEAAYDDALEGAAIELAVENAEIVELPEEMVHDEVHRSVNEFMASMQRQGISPDMYFQLTGTSQEDLHKQHEAEADKRVKTNLVIEAIAKAEGFEASDDEIEKEINDLAAEYSMPVEQVRSLLSADMLKHDIVMKKAVEVITSSAKAK</sequence>
<reference key="1">
    <citation type="journal article" date="2009" name="PLoS Pathog.">
        <title>Genomic evidence for the evolution of Streptococcus equi: host restriction, increased virulence, and genetic exchange with human pathogens.</title>
        <authorList>
            <person name="Holden M.T.G."/>
            <person name="Heather Z."/>
            <person name="Paillot R."/>
            <person name="Steward K.F."/>
            <person name="Webb K."/>
            <person name="Ainslie F."/>
            <person name="Jourdan T."/>
            <person name="Bason N.C."/>
            <person name="Holroyd N.E."/>
            <person name="Mungall K."/>
            <person name="Quail M.A."/>
            <person name="Sanders M."/>
            <person name="Simmonds M."/>
            <person name="Willey D."/>
            <person name="Brooks K."/>
            <person name="Aanensen D.M."/>
            <person name="Spratt B.G."/>
            <person name="Jolley K.A."/>
            <person name="Maiden M.C.J."/>
            <person name="Kehoe M."/>
            <person name="Chanter N."/>
            <person name="Bentley S.D."/>
            <person name="Robinson C."/>
            <person name="Maskell D.J."/>
            <person name="Parkhill J."/>
            <person name="Waller A.S."/>
        </authorList>
    </citation>
    <scope>NUCLEOTIDE SEQUENCE [LARGE SCALE GENOMIC DNA]</scope>
    <source>
        <strain>H70</strain>
    </source>
</reference>
<protein>
    <recommendedName>
        <fullName evidence="1">Trigger factor</fullName>
        <shortName evidence="1">TF</shortName>
        <ecNumber evidence="1">5.2.1.8</ecNumber>
    </recommendedName>
    <alternativeName>
        <fullName evidence="1">PPIase</fullName>
    </alternativeName>
</protein>
<gene>
    <name evidence="1" type="primary">tig</name>
    <name type="ordered locus">SZO_02510</name>
</gene>
<keyword id="KW-0131">Cell cycle</keyword>
<keyword id="KW-0132">Cell division</keyword>
<keyword id="KW-0143">Chaperone</keyword>
<keyword id="KW-0963">Cytoplasm</keyword>
<keyword id="KW-0413">Isomerase</keyword>
<keyword id="KW-0697">Rotamase</keyword>